<sequence>MKPIFRRVAVIGKYPGPGAVSASDSARQIIESIAQFVTQQDCELTLEAETAAHTGLTQYHTLDVEGIGRQCDLCLVVGGDGTMLGVGRRLAGYGTPLVGINQGRLGFITDIPLEGYQDALTPILHGDYEEDVRPLMQACVMRGGECVFEALALNDVVVNRGSTSGMVELRVEVDGVFVSNQRADGLIVASPTGSTAYALSAGGPMLHPSIPGWVLVPIAPHTLSNRPIVLSDATEVAIEVAGGRDISANFDMQSLASLQHGDRILVRRSAHRVCFLHPRGWSYFATLRKKLGWYEGGS</sequence>
<proteinExistence type="inferred from homology"/>
<accession>B9ME57</accession>
<keyword id="KW-0067">ATP-binding</keyword>
<keyword id="KW-0963">Cytoplasm</keyword>
<keyword id="KW-0418">Kinase</keyword>
<keyword id="KW-0520">NAD</keyword>
<keyword id="KW-0521">NADP</keyword>
<keyword id="KW-0547">Nucleotide-binding</keyword>
<keyword id="KW-1185">Reference proteome</keyword>
<keyword id="KW-0808">Transferase</keyword>
<dbReference type="EC" id="2.7.1.23" evidence="1"/>
<dbReference type="EMBL" id="CP001392">
    <property type="protein sequence ID" value="ACM32311.1"/>
    <property type="molecule type" value="Genomic_DNA"/>
</dbReference>
<dbReference type="RefSeq" id="WP_012655803.1">
    <property type="nucleotide sequence ID" value="NC_011992.1"/>
</dbReference>
<dbReference type="SMR" id="B9ME57"/>
<dbReference type="KEGG" id="dia:Dtpsy_0833"/>
<dbReference type="eggNOG" id="COG0061">
    <property type="taxonomic scope" value="Bacteria"/>
</dbReference>
<dbReference type="HOGENOM" id="CLU_008831_0_1_4"/>
<dbReference type="Proteomes" id="UP000000450">
    <property type="component" value="Chromosome"/>
</dbReference>
<dbReference type="GO" id="GO:0005737">
    <property type="term" value="C:cytoplasm"/>
    <property type="evidence" value="ECO:0007669"/>
    <property type="project" value="UniProtKB-SubCell"/>
</dbReference>
<dbReference type="GO" id="GO:0005524">
    <property type="term" value="F:ATP binding"/>
    <property type="evidence" value="ECO:0007669"/>
    <property type="project" value="UniProtKB-KW"/>
</dbReference>
<dbReference type="GO" id="GO:0046872">
    <property type="term" value="F:metal ion binding"/>
    <property type="evidence" value="ECO:0007669"/>
    <property type="project" value="UniProtKB-UniRule"/>
</dbReference>
<dbReference type="GO" id="GO:0051287">
    <property type="term" value="F:NAD binding"/>
    <property type="evidence" value="ECO:0007669"/>
    <property type="project" value="UniProtKB-ARBA"/>
</dbReference>
<dbReference type="GO" id="GO:0003951">
    <property type="term" value="F:NAD+ kinase activity"/>
    <property type="evidence" value="ECO:0007669"/>
    <property type="project" value="UniProtKB-UniRule"/>
</dbReference>
<dbReference type="GO" id="GO:0019674">
    <property type="term" value="P:NAD metabolic process"/>
    <property type="evidence" value="ECO:0007669"/>
    <property type="project" value="InterPro"/>
</dbReference>
<dbReference type="GO" id="GO:0006741">
    <property type="term" value="P:NADP biosynthetic process"/>
    <property type="evidence" value="ECO:0007669"/>
    <property type="project" value="UniProtKB-UniRule"/>
</dbReference>
<dbReference type="Gene3D" id="3.40.50.10330">
    <property type="entry name" value="Probable inorganic polyphosphate/atp-NAD kinase, domain 1"/>
    <property type="match status" value="1"/>
</dbReference>
<dbReference type="Gene3D" id="2.60.200.30">
    <property type="entry name" value="Probable inorganic polyphosphate/atp-NAD kinase, domain 2"/>
    <property type="match status" value="1"/>
</dbReference>
<dbReference type="HAMAP" id="MF_00361">
    <property type="entry name" value="NAD_kinase"/>
    <property type="match status" value="1"/>
</dbReference>
<dbReference type="InterPro" id="IPR017438">
    <property type="entry name" value="ATP-NAD_kinase_N"/>
</dbReference>
<dbReference type="InterPro" id="IPR017437">
    <property type="entry name" value="ATP-NAD_kinase_PpnK-typ_C"/>
</dbReference>
<dbReference type="InterPro" id="IPR016064">
    <property type="entry name" value="NAD/diacylglycerol_kinase_sf"/>
</dbReference>
<dbReference type="InterPro" id="IPR002504">
    <property type="entry name" value="NADK"/>
</dbReference>
<dbReference type="NCBIfam" id="NF002561">
    <property type="entry name" value="PRK02155.1"/>
    <property type="match status" value="1"/>
</dbReference>
<dbReference type="PANTHER" id="PTHR20275">
    <property type="entry name" value="NAD KINASE"/>
    <property type="match status" value="1"/>
</dbReference>
<dbReference type="PANTHER" id="PTHR20275:SF0">
    <property type="entry name" value="NAD KINASE"/>
    <property type="match status" value="1"/>
</dbReference>
<dbReference type="Pfam" id="PF01513">
    <property type="entry name" value="NAD_kinase"/>
    <property type="match status" value="1"/>
</dbReference>
<dbReference type="Pfam" id="PF20143">
    <property type="entry name" value="NAD_kinase_C"/>
    <property type="match status" value="1"/>
</dbReference>
<dbReference type="SUPFAM" id="SSF111331">
    <property type="entry name" value="NAD kinase/diacylglycerol kinase-like"/>
    <property type="match status" value="1"/>
</dbReference>
<protein>
    <recommendedName>
        <fullName evidence="1">NAD kinase</fullName>
        <ecNumber evidence="1">2.7.1.23</ecNumber>
    </recommendedName>
    <alternativeName>
        <fullName evidence="1">ATP-dependent NAD kinase</fullName>
    </alternativeName>
</protein>
<feature type="chain" id="PRO_1000133569" description="NAD kinase">
    <location>
        <begin position="1"/>
        <end position="298"/>
    </location>
</feature>
<feature type="active site" description="Proton acceptor" evidence="1">
    <location>
        <position position="80"/>
    </location>
</feature>
<feature type="binding site" evidence="1">
    <location>
        <begin position="80"/>
        <end position="81"/>
    </location>
    <ligand>
        <name>NAD(+)</name>
        <dbReference type="ChEBI" id="CHEBI:57540"/>
    </ligand>
</feature>
<feature type="binding site" evidence="1">
    <location>
        <begin position="154"/>
        <end position="155"/>
    </location>
    <ligand>
        <name>NAD(+)</name>
        <dbReference type="ChEBI" id="CHEBI:57540"/>
    </ligand>
</feature>
<feature type="binding site" evidence="1">
    <location>
        <position position="182"/>
    </location>
    <ligand>
        <name>NAD(+)</name>
        <dbReference type="ChEBI" id="CHEBI:57540"/>
    </ligand>
</feature>
<feature type="binding site" evidence="1">
    <location>
        <position position="184"/>
    </location>
    <ligand>
        <name>NAD(+)</name>
        <dbReference type="ChEBI" id="CHEBI:57540"/>
    </ligand>
</feature>
<feature type="binding site" evidence="1">
    <location>
        <begin position="195"/>
        <end position="200"/>
    </location>
    <ligand>
        <name>NAD(+)</name>
        <dbReference type="ChEBI" id="CHEBI:57540"/>
    </ligand>
</feature>
<feature type="binding site" evidence="1">
    <location>
        <position position="219"/>
    </location>
    <ligand>
        <name>NAD(+)</name>
        <dbReference type="ChEBI" id="CHEBI:57540"/>
    </ligand>
</feature>
<feature type="binding site" evidence="1">
    <location>
        <position position="253"/>
    </location>
    <ligand>
        <name>NAD(+)</name>
        <dbReference type="ChEBI" id="CHEBI:57540"/>
    </ligand>
</feature>
<name>NADK_ACIET</name>
<reference key="1">
    <citation type="submission" date="2009-01" db="EMBL/GenBank/DDBJ databases">
        <title>Complete sequence of Diaphorobacter sp. TPSY.</title>
        <authorList>
            <consortium name="US DOE Joint Genome Institute"/>
            <person name="Lucas S."/>
            <person name="Copeland A."/>
            <person name="Lapidus A."/>
            <person name="Glavina del Rio T."/>
            <person name="Tice H."/>
            <person name="Bruce D."/>
            <person name="Goodwin L."/>
            <person name="Pitluck S."/>
            <person name="Chertkov O."/>
            <person name="Brettin T."/>
            <person name="Detter J.C."/>
            <person name="Han C."/>
            <person name="Larimer F."/>
            <person name="Land M."/>
            <person name="Hauser L."/>
            <person name="Kyrpides N."/>
            <person name="Mikhailova N."/>
            <person name="Coates J.D."/>
        </authorList>
    </citation>
    <scope>NUCLEOTIDE SEQUENCE [LARGE SCALE GENOMIC DNA]</scope>
    <source>
        <strain>TPSY</strain>
    </source>
</reference>
<comment type="function">
    <text evidence="1">Involved in the regulation of the intracellular balance of NAD and NADP, and is a key enzyme in the biosynthesis of NADP. Catalyzes specifically the phosphorylation on 2'-hydroxyl of the adenosine moiety of NAD to yield NADP.</text>
</comment>
<comment type="catalytic activity">
    <reaction evidence="1">
        <text>NAD(+) + ATP = ADP + NADP(+) + H(+)</text>
        <dbReference type="Rhea" id="RHEA:18629"/>
        <dbReference type="ChEBI" id="CHEBI:15378"/>
        <dbReference type="ChEBI" id="CHEBI:30616"/>
        <dbReference type="ChEBI" id="CHEBI:57540"/>
        <dbReference type="ChEBI" id="CHEBI:58349"/>
        <dbReference type="ChEBI" id="CHEBI:456216"/>
        <dbReference type="EC" id="2.7.1.23"/>
    </reaction>
</comment>
<comment type="cofactor">
    <cofactor evidence="1">
        <name>a divalent metal cation</name>
        <dbReference type="ChEBI" id="CHEBI:60240"/>
    </cofactor>
</comment>
<comment type="subcellular location">
    <subcellularLocation>
        <location evidence="1">Cytoplasm</location>
    </subcellularLocation>
</comment>
<comment type="similarity">
    <text evidence="1">Belongs to the NAD kinase family.</text>
</comment>
<organism>
    <name type="scientific">Acidovorax ebreus (strain TPSY)</name>
    <name type="common">Diaphorobacter sp. (strain TPSY)</name>
    <dbReference type="NCBI Taxonomy" id="535289"/>
    <lineage>
        <taxon>Bacteria</taxon>
        <taxon>Pseudomonadati</taxon>
        <taxon>Pseudomonadota</taxon>
        <taxon>Betaproteobacteria</taxon>
        <taxon>Burkholderiales</taxon>
        <taxon>Comamonadaceae</taxon>
        <taxon>Diaphorobacter</taxon>
    </lineage>
</organism>
<evidence type="ECO:0000255" key="1">
    <source>
        <dbReference type="HAMAP-Rule" id="MF_00361"/>
    </source>
</evidence>
<gene>
    <name evidence="1" type="primary">nadK</name>
    <name type="ordered locus">Dtpsy_0833</name>
</gene>